<name>STS1_AJECN</name>
<reference key="1">
    <citation type="journal article" date="2009" name="Genome Res.">
        <title>Comparative genomic analyses of the human fungal pathogens Coccidioides and their relatives.</title>
        <authorList>
            <person name="Sharpton T.J."/>
            <person name="Stajich J.E."/>
            <person name="Rounsley S.D."/>
            <person name="Gardner M.J."/>
            <person name="Wortman J.R."/>
            <person name="Jordar V.S."/>
            <person name="Maiti R."/>
            <person name="Kodira C.D."/>
            <person name="Neafsey D.E."/>
            <person name="Zeng Q."/>
            <person name="Hung C.-Y."/>
            <person name="McMahan C."/>
            <person name="Muszewska A."/>
            <person name="Grynberg M."/>
            <person name="Mandel M.A."/>
            <person name="Kellner E.M."/>
            <person name="Barker B.M."/>
            <person name="Galgiani J.N."/>
            <person name="Orbach M.J."/>
            <person name="Kirkland T.N."/>
            <person name="Cole G.T."/>
            <person name="Henn M.R."/>
            <person name="Birren B.W."/>
            <person name="Taylor J.W."/>
        </authorList>
    </citation>
    <scope>NUCLEOTIDE SEQUENCE [LARGE SCALE GENOMIC DNA]</scope>
    <source>
        <strain>NAm1 / WU24</strain>
    </source>
</reference>
<dbReference type="EMBL" id="CH476659">
    <property type="protein sequence ID" value="EDN09092.1"/>
    <property type="molecule type" value="Genomic_DNA"/>
</dbReference>
<dbReference type="SMR" id="A6R7I3"/>
<dbReference type="STRING" id="339724.A6R7I3"/>
<dbReference type="KEGG" id="aje:HCAG_05591"/>
<dbReference type="VEuPathDB" id="FungiDB:HCAG_05591"/>
<dbReference type="HOGENOM" id="CLU_033658_0_0_1"/>
<dbReference type="OMA" id="DYTPHFL"/>
<dbReference type="OrthoDB" id="4550at299071"/>
<dbReference type="Proteomes" id="UP000009297">
    <property type="component" value="Unassembled WGS sequence"/>
</dbReference>
<dbReference type="GO" id="GO:0005737">
    <property type="term" value="C:cytoplasm"/>
    <property type="evidence" value="ECO:0007669"/>
    <property type="project" value="UniProtKB-SubCell"/>
</dbReference>
<dbReference type="GO" id="GO:0031965">
    <property type="term" value="C:nuclear membrane"/>
    <property type="evidence" value="ECO:0007669"/>
    <property type="project" value="TreeGrafter"/>
</dbReference>
<dbReference type="GO" id="GO:0070628">
    <property type="term" value="F:proteasome binding"/>
    <property type="evidence" value="ECO:0007669"/>
    <property type="project" value="TreeGrafter"/>
</dbReference>
<dbReference type="GO" id="GO:0071630">
    <property type="term" value="P:nuclear protein quality control by the ubiquitin-proteasome system"/>
    <property type="evidence" value="ECO:0007669"/>
    <property type="project" value="InterPro"/>
</dbReference>
<dbReference type="GO" id="GO:0031144">
    <property type="term" value="P:proteasome localization"/>
    <property type="evidence" value="ECO:0007669"/>
    <property type="project" value="InterPro"/>
</dbReference>
<dbReference type="GO" id="GO:0015031">
    <property type="term" value="P:protein transport"/>
    <property type="evidence" value="ECO:0007669"/>
    <property type="project" value="UniProtKB-KW"/>
</dbReference>
<dbReference type="FunFam" id="1.20.58.1590:FF:000001">
    <property type="entry name" value="Tethering factor for nuclear proteasome STS1"/>
    <property type="match status" value="1"/>
</dbReference>
<dbReference type="Gene3D" id="1.20.58.1590">
    <property type="entry name" value="Tethering factor for nuclear proteasome Cut8/Sts1"/>
    <property type="match status" value="1"/>
</dbReference>
<dbReference type="InterPro" id="IPR013868">
    <property type="entry name" value="Cut8/Sts1_fam"/>
</dbReference>
<dbReference type="InterPro" id="IPR038422">
    <property type="entry name" value="Cut8/Sts1_sf"/>
</dbReference>
<dbReference type="PANTHER" id="PTHR28032">
    <property type="entry name" value="FI02826P"/>
    <property type="match status" value="1"/>
</dbReference>
<dbReference type="PANTHER" id="PTHR28032:SF1">
    <property type="entry name" value="FI02826P"/>
    <property type="match status" value="1"/>
</dbReference>
<dbReference type="Pfam" id="PF08559">
    <property type="entry name" value="Cut8"/>
    <property type="match status" value="1"/>
</dbReference>
<proteinExistence type="inferred from homology"/>
<comment type="function">
    <text evidence="1">Involved in ubiquitin-mediated protein degradation. Regulatory factor in the ubiquitin/proteasome pathway that controls the turnover of proteasome substrates. Targets proteasomes to the nucleus and facilitates the degradation of nuclear proteins (By similarity).</text>
</comment>
<comment type="subunit">
    <text evidence="1">Binds the proteasome.</text>
</comment>
<comment type="subcellular location">
    <subcellularLocation>
        <location evidence="1">Cytoplasm</location>
    </subcellularLocation>
    <subcellularLocation>
        <location evidence="1">Nucleus</location>
    </subcellularLocation>
</comment>
<comment type="similarity">
    <text evidence="3">Belongs to the cut8/STS1 family.</text>
</comment>
<sequence length="312" mass="34371">MNSLLATPPVPPHFYEHCRLSPSRSMSSTNPSGNRKRKAEDDYLPSDHDTRMSASPSNSPAFPPRPLPASRQIKRPRPNISGRPLSLSRLLETLDTDALRSVLRSMCDRHPELATEVVHTAPRPSVSSALQVLNNYQSALHSSIPLGGNSSSDYAYNRVRQHIVNLLDALSDFTPHFLPPNESQTSTALSYLDGATEILHRLPRWDTPQNNLEKDAAYEEMAKAWILVIREAGKRGGGIQLQYGGWDEKLSKHNQTAGGKLQDAVDVLSSNLGWMGTSQDLSNNQGVDTSSIRQQLLSGTYGSGMPLKVGRW</sequence>
<evidence type="ECO:0000250" key="1"/>
<evidence type="ECO:0000256" key="2">
    <source>
        <dbReference type="SAM" id="MobiDB-lite"/>
    </source>
</evidence>
<evidence type="ECO:0000305" key="3"/>
<protein>
    <recommendedName>
        <fullName>Tethering factor for nuclear proteasome STS1</fullName>
    </recommendedName>
</protein>
<feature type="chain" id="PRO_0000409389" description="Tethering factor for nuclear proteasome STS1">
    <location>
        <begin position="1"/>
        <end position="312"/>
    </location>
</feature>
<feature type="region of interest" description="Disordered" evidence="2">
    <location>
        <begin position="1"/>
        <end position="84"/>
    </location>
</feature>
<feature type="compositionally biased region" description="Low complexity" evidence="2">
    <location>
        <begin position="21"/>
        <end position="32"/>
    </location>
</feature>
<feature type="compositionally biased region" description="Basic and acidic residues" evidence="2">
    <location>
        <begin position="38"/>
        <end position="51"/>
    </location>
</feature>
<accession>A6R7I3</accession>
<organism>
    <name type="scientific">Ajellomyces capsulatus (strain NAm1 / WU24)</name>
    <name type="common">Darling's disease fungus</name>
    <name type="synonym">Histoplasma capsulatum</name>
    <dbReference type="NCBI Taxonomy" id="2059318"/>
    <lineage>
        <taxon>Eukaryota</taxon>
        <taxon>Fungi</taxon>
        <taxon>Dikarya</taxon>
        <taxon>Ascomycota</taxon>
        <taxon>Pezizomycotina</taxon>
        <taxon>Eurotiomycetes</taxon>
        <taxon>Eurotiomycetidae</taxon>
        <taxon>Onygenales</taxon>
        <taxon>Ajellomycetaceae</taxon>
        <taxon>Histoplasma</taxon>
    </lineage>
</organism>
<keyword id="KW-0963">Cytoplasm</keyword>
<keyword id="KW-0539">Nucleus</keyword>
<keyword id="KW-0653">Protein transport</keyword>
<keyword id="KW-1185">Reference proteome</keyword>
<keyword id="KW-0813">Transport</keyword>
<gene>
    <name type="primary">STS1</name>
    <name type="ORF">HCAG_05591</name>
</gene>